<feature type="chain" id="PRO_0000049531" description="Uncharacterized protein YflB">
    <location>
        <begin position="1"/>
        <end position="130"/>
    </location>
</feature>
<reference key="1">
    <citation type="journal article" date="1997" name="Gene">
        <title>Cloning and sequencing of a 35.7 kb in the 70 degree-73 degree region of the Bacillus subtilis genome reveal genes for a new two-component system, three spore germination proteins, an iron uptake system and a general stress response protein.</title>
        <authorList>
            <person name="Yamamoto H."/>
            <person name="Uchiyama S."/>
            <person name="Nugroho F.A."/>
            <person name="Sekiguchi J."/>
        </authorList>
    </citation>
    <scope>NUCLEOTIDE SEQUENCE [GENOMIC DNA]</scope>
    <source>
        <strain>168 / AC327</strain>
    </source>
</reference>
<reference key="2">
    <citation type="journal article" date="1997" name="Nature">
        <title>The complete genome sequence of the Gram-positive bacterium Bacillus subtilis.</title>
        <authorList>
            <person name="Kunst F."/>
            <person name="Ogasawara N."/>
            <person name="Moszer I."/>
            <person name="Albertini A.M."/>
            <person name="Alloni G."/>
            <person name="Azevedo V."/>
            <person name="Bertero M.G."/>
            <person name="Bessieres P."/>
            <person name="Bolotin A."/>
            <person name="Borchert S."/>
            <person name="Borriss R."/>
            <person name="Boursier L."/>
            <person name="Brans A."/>
            <person name="Braun M."/>
            <person name="Brignell S.C."/>
            <person name="Bron S."/>
            <person name="Brouillet S."/>
            <person name="Bruschi C.V."/>
            <person name="Caldwell B."/>
            <person name="Capuano V."/>
            <person name="Carter N.M."/>
            <person name="Choi S.-K."/>
            <person name="Codani J.-J."/>
            <person name="Connerton I.F."/>
            <person name="Cummings N.J."/>
            <person name="Daniel R.A."/>
            <person name="Denizot F."/>
            <person name="Devine K.M."/>
            <person name="Duesterhoeft A."/>
            <person name="Ehrlich S.D."/>
            <person name="Emmerson P.T."/>
            <person name="Entian K.-D."/>
            <person name="Errington J."/>
            <person name="Fabret C."/>
            <person name="Ferrari E."/>
            <person name="Foulger D."/>
            <person name="Fritz C."/>
            <person name="Fujita M."/>
            <person name="Fujita Y."/>
            <person name="Fuma S."/>
            <person name="Galizzi A."/>
            <person name="Galleron N."/>
            <person name="Ghim S.-Y."/>
            <person name="Glaser P."/>
            <person name="Goffeau A."/>
            <person name="Golightly E.J."/>
            <person name="Grandi G."/>
            <person name="Guiseppi G."/>
            <person name="Guy B.J."/>
            <person name="Haga K."/>
            <person name="Haiech J."/>
            <person name="Harwood C.R."/>
            <person name="Henaut A."/>
            <person name="Hilbert H."/>
            <person name="Holsappel S."/>
            <person name="Hosono S."/>
            <person name="Hullo M.-F."/>
            <person name="Itaya M."/>
            <person name="Jones L.-M."/>
            <person name="Joris B."/>
            <person name="Karamata D."/>
            <person name="Kasahara Y."/>
            <person name="Klaerr-Blanchard M."/>
            <person name="Klein C."/>
            <person name="Kobayashi Y."/>
            <person name="Koetter P."/>
            <person name="Koningstein G."/>
            <person name="Krogh S."/>
            <person name="Kumano M."/>
            <person name="Kurita K."/>
            <person name="Lapidus A."/>
            <person name="Lardinois S."/>
            <person name="Lauber J."/>
            <person name="Lazarevic V."/>
            <person name="Lee S.-M."/>
            <person name="Levine A."/>
            <person name="Liu H."/>
            <person name="Masuda S."/>
            <person name="Mauel C."/>
            <person name="Medigue C."/>
            <person name="Medina N."/>
            <person name="Mellado R.P."/>
            <person name="Mizuno M."/>
            <person name="Moestl D."/>
            <person name="Nakai S."/>
            <person name="Noback M."/>
            <person name="Noone D."/>
            <person name="O'Reilly M."/>
            <person name="Ogawa K."/>
            <person name="Ogiwara A."/>
            <person name="Oudega B."/>
            <person name="Park S.-H."/>
            <person name="Parro V."/>
            <person name="Pohl T.M."/>
            <person name="Portetelle D."/>
            <person name="Porwollik S."/>
            <person name="Prescott A.M."/>
            <person name="Presecan E."/>
            <person name="Pujic P."/>
            <person name="Purnelle B."/>
            <person name="Rapoport G."/>
            <person name="Rey M."/>
            <person name="Reynolds S."/>
            <person name="Rieger M."/>
            <person name="Rivolta C."/>
            <person name="Rocha E."/>
            <person name="Roche B."/>
            <person name="Rose M."/>
            <person name="Sadaie Y."/>
            <person name="Sato T."/>
            <person name="Scanlan E."/>
            <person name="Schleich S."/>
            <person name="Schroeter R."/>
            <person name="Scoffone F."/>
            <person name="Sekiguchi J."/>
            <person name="Sekowska A."/>
            <person name="Seror S.J."/>
            <person name="Serror P."/>
            <person name="Shin B.-S."/>
            <person name="Soldo B."/>
            <person name="Sorokin A."/>
            <person name="Tacconi E."/>
            <person name="Takagi T."/>
            <person name="Takahashi H."/>
            <person name="Takemaru K."/>
            <person name="Takeuchi M."/>
            <person name="Tamakoshi A."/>
            <person name="Tanaka T."/>
            <person name="Terpstra P."/>
            <person name="Tognoni A."/>
            <person name="Tosato V."/>
            <person name="Uchiyama S."/>
            <person name="Vandenbol M."/>
            <person name="Vannier F."/>
            <person name="Vassarotti A."/>
            <person name="Viari A."/>
            <person name="Wambutt R."/>
            <person name="Wedler E."/>
            <person name="Wedler H."/>
            <person name="Weitzenegger T."/>
            <person name="Winters P."/>
            <person name="Wipat A."/>
            <person name="Yamamoto H."/>
            <person name="Yamane K."/>
            <person name="Yasumoto K."/>
            <person name="Yata K."/>
            <person name="Yoshida K."/>
            <person name="Yoshikawa H.-F."/>
            <person name="Zumstein E."/>
            <person name="Yoshikawa H."/>
            <person name="Danchin A."/>
        </authorList>
    </citation>
    <scope>NUCLEOTIDE SEQUENCE [LARGE SCALE GENOMIC DNA]</scope>
    <source>
        <strain>168</strain>
    </source>
</reference>
<reference key="3">
    <citation type="journal article" date="2009" name="Microbiology">
        <title>From a consortium sequence to a unified sequence: the Bacillus subtilis 168 reference genome a decade later.</title>
        <authorList>
            <person name="Barbe V."/>
            <person name="Cruveiller S."/>
            <person name="Kunst F."/>
            <person name="Lenoble P."/>
            <person name="Meurice G."/>
            <person name="Sekowska A."/>
            <person name="Vallenet D."/>
            <person name="Wang T."/>
            <person name="Moszer I."/>
            <person name="Medigue C."/>
            <person name="Danchin A."/>
        </authorList>
    </citation>
    <scope>SEQUENCE REVISION TO N-TERMINUS</scope>
</reference>
<gene>
    <name type="primary">yflB</name>
    <name type="ordered locus">BSU07740</name>
</gene>
<comment type="sequence caution" evidence="1">
    <conflict type="frameshift">
        <sequence resource="EMBL-CDS" id="BAA22295"/>
    </conflict>
</comment>
<accession>O34887</accession>
<dbReference type="EMBL" id="D86417">
    <property type="protein sequence ID" value="BAA22295.1"/>
    <property type="status" value="ALT_FRAME"/>
    <property type="molecule type" value="Genomic_DNA"/>
</dbReference>
<dbReference type="EMBL" id="AL009126">
    <property type="protein sequence ID" value="CAB12603.2"/>
    <property type="molecule type" value="Genomic_DNA"/>
</dbReference>
<dbReference type="PIR" id="H69809">
    <property type="entry name" value="H69809"/>
</dbReference>
<dbReference type="RefSeq" id="NP_388655.2">
    <property type="nucleotide sequence ID" value="NC_000964.3"/>
</dbReference>
<dbReference type="RefSeq" id="WP_003233692.1">
    <property type="nucleotide sequence ID" value="NZ_OZ025638.1"/>
</dbReference>
<dbReference type="SMR" id="O34887"/>
<dbReference type="FunCoup" id="O34887">
    <property type="interactions" value="5"/>
</dbReference>
<dbReference type="STRING" id="224308.BSU07735"/>
<dbReference type="PaxDb" id="224308-BSU07735"/>
<dbReference type="EnsemblBacteria" id="CAB12603">
    <property type="protein sequence ID" value="CAB12603"/>
    <property type="gene ID" value="BSU_07735"/>
</dbReference>
<dbReference type="GeneID" id="936124"/>
<dbReference type="KEGG" id="bsu:BSU07735"/>
<dbReference type="PATRIC" id="fig|224308.179.peg.838"/>
<dbReference type="eggNOG" id="ENOG5032TNY">
    <property type="taxonomic scope" value="Bacteria"/>
</dbReference>
<dbReference type="InParanoid" id="O34887"/>
<dbReference type="OrthoDB" id="9798476at2"/>
<dbReference type="PhylomeDB" id="O34887"/>
<dbReference type="BioCyc" id="BSUB:BSU07735-MONOMER"/>
<dbReference type="Proteomes" id="UP000001570">
    <property type="component" value="Chromosome"/>
</dbReference>
<dbReference type="InterPro" id="IPR052573">
    <property type="entry name" value="DnaJ_C_subfamily_28"/>
</dbReference>
<dbReference type="InterPro" id="IPR018961">
    <property type="entry name" value="DnaJ_homolog_subfam-C_membr-28"/>
</dbReference>
<dbReference type="PANTHER" id="PTHR39158:SF1">
    <property type="entry name" value="DNAJ HOMOLOG SUBFAMILY C MEMBER 28"/>
    <property type="match status" value="1"/>
</dbReference>
<dbReference type="PANTHER" id="PTHR39158">
    <property type="entry name" value="OS08G0560600 PROTEIN"/>
    <property type="match status" value="1"/>
</dbReference>
<dbReference type="Pfam" id="PF09350">
    <property type="entry name" value="DJC28_CD"/>
    <property type="match status" value="1"/>
</dbReference>
<organism>
    <name type="scientific">Bacillus subtilis (strain 168)</name>
    <dbReference type="NCBI Taxonomy" id="224308"/>
    <lineage>
        <taxon>Bacteria</taxon>
        <taxon>Bacillati</taxon>
        <taxon>Bacillota</taxon>
        <taxon>Bacilli</taxon>
        <taxon>Bacillales</taxon>
        <taxon>Bacillaceae</taxon>
        <taxon>Bacillus</taxon>
    </lineage>
</organism>
<proteinExistence type="predicted"/>
<evidence type="ECO:0000305" key="1"/>
<sequence>MDFSHIVSEDKIKRAIKDGDFQNLPGMGKPLPKDDAAHLPESLRMGYRILKNAGMAEDEGALKKELMTIDHLIEKCYDEKEREQLIRKKSEKQLLLDKLVDKKGMFSKPASAFYKNKVYDRLGRNRPSSS</sequence>
<name>YFLB_BACSU</name>
<keyword id="KW-1185">Reference proteome</keyword>
<protein>
    <recommendedName>
        <fullName>Uncharacterized protein YflB</fullName>
    </recommendedName>
</protein>